<dbReference type="EC" id="3.5.4.30" evidence="1"/>
<dbReference type="EMBL" id="CP000820">
    <property type="protein sequence ID" value="ABW09706.1"/>
    <property type="molecule type" value="Genomic_DNA"/>
</dbReference>
<dbReference type="RefSeq" id="WP_012157683.1">
    <property type="nucleotide sequence ID" value="NC_009921.1"/>
</dbReference>
<dbReference type="SMR" id="A8LDU1"/>
<dbReference type="STRING" id="298653.Franean1_0239"/>
<dbReference type="KEGG" id="fre:Franean1_0239"/>
<dbReference type="eggNOG" id="COG0717">
    <property type="taxonomic scope" value="Bacteria"/>
</dbReference>
<dbReference type="HOGENOM" id="CLU_087476_2_0_11"/>
<dbReference type="UniPathway" id="UPA00610">
    <property type="reaction ID" value="UER00667"/>
</dbReference>
<dbReference type="GO" id="GO:0033973">
    <property type="term" value="F:dCTP deaminase (dUMP-forming) activity"/>
    <property type="evidence" value="ECO:0007669"/>
    <property type="project" value="UniProtKB-UniRule"/>
</dbReference>
<dbReference type="GO" id="GO:0008829">
    <property type="term" value="F:dCTP deaminase activity"/>
    <property type="evidence" value="ECO:0007669"/>
    <property type="project" value="InterPro"/>
</dbReference>
<dbReference type="GO" id="GO:0000166">
    <property type="term" value="F:nucleotide binding"/>
    <property type="evidence" value="ECO:0007669"/>
    <property type="project" value="UniProtKB-KW"/>
</dbReference>
<dbReference type="GO" id="GO:0006226">
    <property type="term" value="P:dUMP biosynthetic process"/>
    <property type="evidence" value="ECO:0007669"/>
    <property type="project" value="UniProtKB-UniRule"/>
</dbReference>
<dbReference type="GO" id="GO:0006229">
    <property type="term" value="P:dUTP biosynthetic process"/>
    <property type="evidence" value="ECO:0007669"/>
    <property type="project" value="InterPro"/>
</dbReference>
<dbReference type="GO" id="GO:0015949">
    <property type="term" value="P:nucleobase-containing small molecule interconversion"/>
    <property type="evidence" value="ECO:0007669"/>
    <property type="project" value="TreeGrafter"/>
</dbReference>
<dbReference type="CDD" id="cd07557">
    <property type="entry name" value="trimeric_dUTPase"/>
    <property type="match status" value="1"/>
</dbReference>
<dbReference type="FunFam" id="2.70.40.10:FF:000005">
    <property type="entry name" value="dCTP deaminase, dUMP-forming"/>
    <property type="match status" value="1"/>
</dbReference>
<dbReference type="Gene3D" id="2.70.40.10">
    <property type="match status" value="1"/>
</dbReference>
<dbReference type="HAMAP" id="MF_00146">
    <property type="entry name" value="dCTP_deaminase"/>
    <property type="match status" value="1"/>
</dbReference>
<dbReference type="InterPro" id="IPR011962">
    <property type="entry name" value="dCTP_deaminase"/>
</dbReference>
<dbReference type="InterPro" id="IPR036157">
    <property type="entry name" value="dUTPase-like_sf"/>
</dbReference>
<dbReference type="InterPro" id="IPR033704">
    <property type="entry name" value="dUTPase_trimeric"/>
</dbReference>
<dbReference type="NCBIfam" id="TIGR02274">
    <property type="entry name" value="dCTP_deam"/>
    <property type="match status" value="1"/>
</dbReference>
<dbReference type="PANTHER" id="PTHR42680">
    <property type="entry name" value="DCTP DEAMINASE"/>
    <property type="match status" value="1"/>
</dbReference>
<dbReference type="PANTHER" id="PTHR42680:SF3">
    <property type="entry name" value="DCTP DEAMINASE"/>
    <property type="match status" value="1"/>
</dbReference>
<dbReference type="Pfam" id="PF22769">
    <property type="entry name" value="DCD"/>
    <property type="match status" value="1"/>
</dbReference>
<dbReference type="SUPFAM" id="SSF51283">
    <property type="entry name" value="dUTPase-like"/>
    <property type="match status" value="1"/>
</dbReference>
<name>DCDB_PARS2</name>
<accession>A8LDU1</accession>
<comment type="function">
    <text evidence="1">Bifunctional enzyme that catalyzes both the deamination of dCTP to dUTP and the hydrolysis of dUTP to dUMP without releasing the toxic dUTP intermediate.</text>
</comment>
<comment type="catalytic activity">
    <reaction evidence="1">
        <text>dCTP + 2 H2O = dUMP + NH4(+) + diphosphate</text>
        <dbReference type="Rhea" id="RHEA:19205"/>
        <dbReference type="ChEBI" id="CHEBI:15377"/>
        <dbReference type="ChEBI" id="CHEBI:28938"/>
        <dbReference type="ChEBI" id="CHEBI:33019"/>
        <dbReference type="ChEBI" id="CHEBI:61481"/>
        <dbReference type="ChEBI" id="CHEBI:246422"/>
        <dbReference type="EC" id="3.5.4.30"/>
    </reaction>
</comment>
<comment type="pathway">
    <text evidence="1">Pyrimidine metabolism; dUMP biosynthesis; dUMP from dCTP: step 1/1.</text>
</comment>
<comment type="subunit">
    <text evidence="1">Homotrimer.</text>
</comment>
<comment type="similarity">
    <text evidence="1">Belongs to the dCTP deaminase family.</text>
</comment>
<proteinExistence type="inferred from homology"/>
<organism>
    <name type="scientific">Parafrankia sp. (strain EAN1pec)</name>
    <dbReference type="NCBI Taxonomy" id="298653"/>
    <lineage>
        <taxon>Bacteria</taxon>
        <taxon>Bacillati</taxon>
        <taxon>Actinomycetota</taxon>
        <taxon>Actinomycetes</taxon>
        <taxon>Frankiales</taxon>
        <taxon>Frankiaceae</taxon>
        <taxon>Parafrankia</taxon>
    </lineage>
</organism>
<gene>
    <name evidence="1" type="primary">dcd</name>
    <name type="ordered locus">Franean1_0239</name>
</gene>
<feature type="chain" id="PRO_1000096426" description="dCTP deaminase, dUMP-forming">
    <location>
        <begin position="1"/>
        <end position="201"/>
    </location>
</feature>
<feature type="active site" description="Proton donor/acceptor" evidence="1">
    <location>
        <position position="129"/>
    </location>
</feature>
<feature type="binding site" evidence="1">
    <location>
        <begin position="101"/>
        <end position="106"/>
    </location>
    <ligand>
        <name>dCTP</name>
        <dbReference type="ChEBI" id="CHEBI:61481"/>
    </ligand>
</feature>
<feature type="binding site" evidence="1">
    <location>
        <position position="119"/>
    </location>
    <ligand>
        <name>dCTP</name>
        <dbReference type="ChEBI" id="CHEBI:61481"/>
    </ligand>
</feature>
<feature type="binding site" evidence="1">
    <location>
        <begin position="127"/>
        <end position="129"/>
    </location>
    <ligand>
        <name>dCTP</name>
        <dbReference type="ChEBI" id="CHEBI:61481"/>
    </ligand>
</feature>
<feature type="binding site" evidence="1">
    <location>
        <position position="148"/>
    </location>
    <ligand>
        <name>dCTP</name>
        <dbReference type="ChEBI" id="CHEBI:61481"/>
    </ligand>
</feature>
<feature type="binding site" evidence="1">
    <location>
        <position position="162"/>
    </location>
    <ligand>
        <name>dCTP</name>
        <dbReference type="ChEBI" id="CHEBI:61481"/>
    </ligand>
</feature>
<feature type="binding site" evidence="1">
    <location>
        <position position="174"/>
    </location>
    <ligand>
        <name>dCTP</name>
        <dbReference type="ChEBI" id="CHEBI:61481"/>
    </ligand>
</feature>
<feature type="site" description="Important for bifunctional activity" evidence="1">
    <location>
        <begin position="116"/>
        <end position="117"/>
    </location>
</feature>
<keyword id="KW-0378">Hydrolase</keyword>
<keyword id="KW-0546">Nucleotide metabolism</keyword>
<keyword id="KW-0547">Nucleotide-binding</keyword>
<protein>
    <recommendedName>
        <fullName evidence="1">dCTP deaminase, dUMP-forming</fullName>
        <ecNumber evidence="1">3.5.4.30</ecNumber>
    </recommendedName>
    <alternativeName>
        <fullName evidence="1">Bifunctional dCTP deaminase:dUTPase</fullName>
    </alternativeName>
    <alternativeName>
        <fullName evidence="1">DCD-DUT</fullName>
    </alternativeName>
</protein>
<evidence type="ECO:0000255" key="1">
    <source>
        <dbReference type="HAMAP-Rule" id="MF_00146"/>
    </source>
</evidence>
<reference key="1">
    <citation type="journal article" date="2007" name="Genome Res.">
        <title>Genome characteristics of facultatively symbiotic Frankia sp. strains reflect host range and host plant biogeography.</title>
        <authorList>
            <person name="Normand P."/>
            <person name="Lapierre P."/>
            <person name="Tisa L.S."/>
            <person name="Gogarten J.P."/>
            <person name="Alloisio N."/>
            <person name="Bagnarol E."/>
            <person name="Bassi C.A."/>
            <person name="Berry A.M."/>
            <person name="Bickhart D.M."/>
            <person name="Choisne N."/>
            <person name="Couloux A."/>
            <person name="Cournoyer B."/>
            <person name="Cruveiller S."/>
            <person name="Daubin V."/>
            <person name="Demange N."/>
            <person name="Francino M.P."/>
            <person name="Goltsman E."/>
            <person name="Huang Y."/>
            <person name="Kopp O.R."/>
            <person name="Labarre L."/>
            <person name="Lapidus A."/>
            <person name="Lavire C."/>
            <person name="Marechal J."/>
            <person name="Martinez M."/>
            <person name="Mastronunzio J.E."/>
            <person name="Mullin B.C."/>
            <person name="Niemann J."/>
            <person name="Pujic P."/>
            <person name="Rawnsley T."/>
            <person name="Rouy Z."/>
            <person name="Schenowitz C."/>
            <person name="Sellstedt A."/>
            <person name="Tavares F."/>
            <person name="Tomkins J.P."/>
            <person name="Vallenet D."/>
            <person name="Valverde C."/>
            <person name="Wall L.G."/>
            <person name="Wang Y."/>
            <person name="Medigue C."/>
            <person name="Benson D.R."/>
        </authorList>
    </citation>
    <scope>NUCLEOTIDE SEQUENCE [LARGE SCALE GENOMIC DNA]</scope>
    <source>
        <strain>EAN1pec</strain>
    </source>
</reference>
<sequence length="201" mass="22015">MLLSDRDIRAEITAGRVRLDPYDEGLIQPSSVDLRLDRAFRVFQNHRYSHIDPAVEQEDLTELVAPEGDEPFVLHPGEFVLGSTLEVVTLPEDLAGRLEGKSSLGRLGLLTHSTAGFIDPGFSGHVTLELSNVATLPIKLWPGMKIGQLCLFRLSTPAEHPYGSAIYGSRYQGQRGPTPSRAYRDFTRAAVPEIPNGSHGA</sequence>